<evidence type="ECO:0000255" key="1">
    <source>
        <dbReference type="HAMAP-Rule" id="MF_00414"/>
    </source>
</evidence>
<accession>Q62MP2</accession>
<feature type="chain" id="PRO_0000200700" description="Probable protein kinase UbiB">
    <location>
        <begin position="1"/>
        <end position="525"/>
    </location>
</feature>
<feature type="transmembrane region" description="Helical" evidence="1">
    <location>
        <begin position="501"/>
        <end position="521"/>
    </location>
</feature>
<feature type="domain" description="Protein kinase" evidence="1">
    <location>
        <begin position="118"/>
        <end position="500"/>
    </location>
</feature>
<feature type="active site" description="Proton acceptor" evidence="1">
    <location>
        <position position="285"/>
    </location>
</feature>
<feature type="binding site" evidence="1">
    <location>
        <begin position="124"/>
        <end position="132"/>
    </location>
    <ligand>
        <name>ATP</name>
        <dbReference type="ChEBI" id="CHEBI:30616"/>
    </ligand>
</feature>
<feature type="binding site" evidence="1">
    <location>
        <position position="150"/>
    </location>
    <ligand>
        <name>ATP</name>
        <dbReference type="ChEBI" id="CHEBI:30616"/>
    </ligand>
</feature>
<gene>
    <name evidence="1" type="primary">ubiB</name>
    <name type="ordered locus">BMA0189</name>
</gene>
<dbReference type="EC" id="2.7.-.-" evidence="1"/>
<dbReference type="EMBL" id="CP000010">
    <property type="protein sequence ID" value="AAU49009.1"/>
    <property type="molecule type" value="Genomic_DNA"/>
</dbReference>
<dbReference type="RefSeq" id="WP_004189815.1">
    <property type="nucleotide sequence ID" value="NC_006348.1"/>
</dbReference>
<dbReference type="RefSeq" id="YP_102026.1">
    <property type="nucleotide sequence ID" value="NC_006348.1"/>
</dbReference>
<dbReference type="SMR" id="Q62MP2"/>
<dbReference type="GeneID" id="93059152"/>
<dbReference type="KEGG" id="bma:BMA0189"/>
<dbReference type="PATRIC" id="fig|243160.12.peg.187"/>
<dbReference type="eggNOG" id="COG0661">
    <property type="taxonomic scope" value="Bacteria"/>
</dbReference>
<dbReference type="HOGENOM" id="CLU_006533_0_0_4"/>
<dbReference type="UniPathway" id="UPA00232"/>
<dbReference type="Proteomes" id="UP000006693">
    <property type="component" value="Chromosome 1"/>
</dbReference>
<dbReference type="GO" id="GO:0005886">
    <property type="term" value="C:plasma membrane"/>
    <property type="evidence" value="ECO:0007669"/>
    <property type="project" value="UniProtKB-SubCell"/>
</dbReference>
<dbReference type="GO" id="GO:0005524">
    <property type="term" value="F:ATP binding"/>
    <property type="evidence" value="ECO:0007669"/>
    <property type="project" value="UniProtKB-KW"/>
</dbReference>
<dbReference type="GO" id="GO:0004672">
    <property type="term" value="F:protein kinase activity"/>
    <property type="evidence" value="ECO:0007669"/>
    <property type="project" value="UniProtKB-UniRule"/>
</dbReference>
<dbReference type="GO" id="GO:0010795">
    <property type="term" value="P:regulation of ubiquinone biosynthetic process"/>
    <property type="evidence" value="ECO:0007669"/>
    <property type="project" value="UniProtKB-UniRule"/>
</dbReference>
<dbReference type="GO" id="GO:0006744">
    <property type="term" value="P:ubiquinone biosynthetic process"/>
    <property type="evidence" value="ECO:0007669"/>
    <property type="project" value="UniProtKB-UniPathway"/>
</dbReference>
<dbReference type="CDD" id="cd13972">
    <property type="entry name" value="UbiB"/>
    <property type="match status" value="1"/>
</dbReference>
<dbReference type="HAMAP" id="MF_00414">
    <property type="entry name" value="UbiB"/>
    <property type="match status" value="1"/>
</dbReference>
<dbReference type="InterPro" id="IPR004147">
    <property type="entry name" value="ABC1_dom"/>
</dbReference>
<dbReference type="InterPro" id="IPR011009">
    <property type="entry name" value="Kinase-like_dom_sf"/>
</dbReference>
<dbReference type="InterPro" id="IPR010232">
    <property type="entry name" value="UbiB"/>
</dbReference>
<dbReference type="InterPro" id="IPR045308">
    <property type="entry name" value="UbiB_bact"/>
</dbReference>
<dbReference type="InterPro" id="IPR050154">
    <property type="entry name" value="UbiB_kinase"/>
</dbReference>
<dbReference type="NCBIfam" id="NF003404">
    <property type="entry name" value="PRK04750.1"/>
    <property type="match status" value="1"/>
</dbReference>
<dbReference type="NCBIfam" id="TIGR01982">
    <property type="entry name" value="UbiB"/>
    <property type="match status" value="1"/>
</dbReference>
<dbReference type="PANTHER" id="PTHR10566">
    <property type="entry name" value="CHAPERONE-ACTIVITY OF BC1 COMPLEX CABC1 -RELATED"/>
    <property type="match status" value="1"/>
</dbReference>
<dbReference type="PANTHER" id="PTHR10566:SF113">
    <property type="entry name" value="PROTEIN ACTIVITY OF BC1 COMPLEX KINASE 7, CHLOROPLASTIC"/>
    <property type="match status" value="1"/>
</dbReference>
<dbReference type="Pfam" id="PF03109">
    <property type="entry name" value="ABC1"/>
    <property type="match status" value="1"/>
</dbReference>
<dbReference type="SUPFAM" id="SSF56112">
    <property type="entry name" value="Protein kinase-like (PK-like)"/>
    <property type="match status" value="1"/>
</dbReference>
<organism>
    <name type="scientific">Burkholderia mallei (strain ATCC 23344)</name>
    <dbReference type="NCBI Taxonomy" id="243160"/>
    <lineage>
        <taxon>Bacteria</taxon>
        <taxon>Pseudomonadati</taxon>
        <taxon>Pseudomonadota</taxon>
        <taxon>Betaproteobacteria</taxon>
        <taxon>Burkholderiales</taxon>
        <taxon>Burkholderiaceae</taxon>
        <taxon>Burkholderia</taxon>
        <taxon>pseudomallei group</taxon>
    </lineage>
</organism>
<reference key="1">
    <citation type="journal article" date="2004" name="Proc. Natl. Acad. Sci. U.S.A.">
        <title>Structural flexibility in the Burkholderia mallei genome.</title>
        <authorList>
            <person name="Nierman W.C."/>
            <person name="DeShazer D."/>
            <person name="Kim H.S."/>
            <person name="Tettelin H."/>
            <person name="Nelson K.E."/>
            <person name="Feldblyum T.V."/>
            <person name="Ulrich R.L."/>
            <person name="Ronning C.M."/>
            <person name="Brinkac L.M."/>
            <person name="Daugherty S.C."/>
            <person name="Davidsen T.D."/>
            <person name="DeBoy R.T."/>
            <person name="Dimitrov G."/>
            <person name="Dodson R.J."/>
            <person name="Durkin A.S."/>
            <person name="Gwinn M.L."/>
            <person name="Haft D.H."/>
            <person name="Khouri H.M."/>
            <person name="Kolonay J.F."/>
            <person name="Madupu R."/>
            <person name="Mohammoud Y."/>
            <person name="Nelson W.C."/>
            <person name="Radune D."/>
            <person name="Romero C.M."/>
            <person name="Sarria S."/>
            <person name="Selengut J."/>
            <person name="Shamblin C."/>
            <person name="Sullivan S.A."/>
            <person name="White O."/>
            <person name="Yu Y."/>
            <person name="Zafar N."/>
            <person name="Zhou L."/>
            <person name="Fraser C.M."/>
        </authorList>
    </citation>
    <scope>NUCLEOTIDE SEQUENCE [LARGE SCALE GENOMIC DNA]</scope>
    <source>
        <strain>ATCC 23344</strain>
    </source>
</reference>
<comment type="function">
    <text evidence="1">Is probably a protein kinase regulator of UbiI activity which is involved in aerobic coenzyme Q (ubiquinone) biosynthesis.</text>
</comment>
<comment type="pathway">
    <text>Cofactor biosynthesis; ubiquinone biosynthesis [regulation].</text>
</comment>
<comment type="subcellular location">
    <subcellularLocation>
        <location evidence="1">Cell inner membrane</location>
        <topology evidence="1">Single-pass membrane protein</topology>
    </subcellularLocation>
</comment>
<comment type="similarity">
    <text evidence="1">Belongs to the ABC1 family. UbiB subfamily.</text>
</comment>
<protein>
    <recommendedName>
        <fullName evidence="1">Probable protein kinase UbiB</fullName>
        <ecNumber evidence="1">2.7.-.-</ecNumber>
    </recommendedName>
    <alternativeName>
        <fullName evidence="1">Ubiquinone biosynthesis protein UbiB</fullName>
    </alternativeName>
</protein>
<keyword id="KW-0067">ATP-binding</keyword>
<keyword id="KW-0997">Cell inner membrane</keyword>
<keyword id="KW-1003">Cell membrane</keyword>
<keyword id="KW-0418">Kinase</keyword>
<keyword id="KW-0472">Membrane</keyword>
<keyword id="KW-0547">Nucleotide-binding</keyword>
<keyword id="KW-1185">Reference proteome</keyword>
<keyword id="KW-0808">Transferase</keyword>
<keyword id="KW-0812">Transmembrane</keyword>
<keyword id="KW-1133">Transmembrane helix</keyword>
<keyword id="KW-0831">Ubiquinone biosynthesis</keyword>
<proteinExistence type="inferred from homology"/>
<name>UBIB_BURMA</name>
<sequence>MRIFRFVKIVFTVIRFGLDEVMLSRIENPRVKLLLRITTIGRRFADPPAVRLRRALESLGPIFVKFGQVLSTRRDLLPVDFANELAKLQDQVPPFDSAVAIAIVEKSLGARIDVLFDEFERVPVASASIAQVHFAKLKQGEHKGKAVAVKVLRPNMLPVIDSDLALMRDIATWAERLWADGRRLKPREVVAEFDKYLHDELDLMREAANGSQLRRNFAGLDLLLVPEMFWDYSTPAVLVMERMTGVPISQVDTLRAAGVDIPKLAREGVEIFFTQVFRDGFFHADMHPGNIQVSLDPKHFGRYIALDFGIVGALSDFDKNYLAQNFLAFFKRDYHRVATLHLESGWVPPDTRVEELESAIRAVCEPYFDRALKDISLGQVLMRLFSTSRRFNVEIQPQLVLLQKTMLNVEGLGRSLDPELDLWKTAKPYLERWMTEQIGLRGWYERFKVEAPQWSKTLPQLPRLVHQALISHHEAPRAISDDLIRQILVEQRRTNRLLQALLVFGLAVGAGAVIARVLIVLAYGG</sequence>